<reference key="1">
    <citation type="submission" date="2007-11" db="EMBL/GenBank/DDBJ databases">
        <title>Complete genome sequence of Clostridium phytofermentans ISDg.</title>
        <authorList>
            <person name="Leschine S.B."/>
            <person name="Warnick T.A."/>
            <person name="Blanchard J.L."/>
            <person name="Schnell D.J."/>
            <person name="Petit E.L."/>
            <person name="LaTouf W.G."/>
            <person name="Copeland A."/>
            <person name="Lucas S."/>
            <person name="Lapidus A."/>
            <person name="Barry K."/>
            <person name="Glavina del Rio T."/>
            <person name="Dalin E."/>
            <person name="Tice H."/>
            <person name="Pitluck S."/>
            <person name="Kiss H."/>
            <person name="Brettin T."/>
            <person name="Bruce D."/>
            <person name="Detter J.C."/>
            <person name="Han C."/>
            <person name="Kuske C."/>
            <person name="Schmutz J."/>
            <person name="Larimer F."/>
            <person name="Land M."/>
            <person name="Hauser L."/>
            <person name="Kyrpides N."/>
            <person name="Kim E.A."/>
            <person name="Richardson P."/>
        </authorList>
    </citation>
    <scope>NUCLEOTIDE SEQUENCE [LARGE SCALE GENOMIC DNA]</scope>
    <source>
        <strain>ATCC 700394 / DSM 18823 / ISDg</strain>
    </source>
</reference>
<gene>
    <name evidence="1" type="primary">atpA</name>
    <name type="ordered locus">Cphy_3738</name>
</gene>
<proteinExistence type="inferred from homology"/>
<sequence length="502" mass="55007">MNLRPEEISSVIKEQIKNYSMQLEVSDVGTVIQVADGIARIHGLENAMQGELLEFPGDVYGMVLNLEEDNVGAVLLGDMKNINEGDTVKTTGRVVEVPVGDALLGRVVNALGQPIDGKGPIETKKYRQIERVASGVIARKSVDTPLQTGIKAIDSMVPIGRGQRELIIGDKQTGKTAIAIDTIINQKGQNVKCIYVAIGQKASTVANIVKTLEEYGALDYTTVVASTASELAPLQYIAPYSGCAIGEEWMESGQDVLVIYDDLTKHAAAYRTLSLLLKRPPGREAYPGDVFYLHSRLLERAARLNDELGGGSLTALPIIETQAGDVSAYIPTNVISITDGQIYLETDMFNAGFRPAVNAGLSVSRVGGSAQIKAMKKIAGPIRIELAQYRELAAFAQFGSDLDADTKEKLAQGERIREILKQPQYKPMPVEYQVIIIFAATKKYLLDIEVSKIRSFEKELFEFIDTKYPEIPASIRDKKVMDEECEKALITAIENFKKEFTN</sequence>
<comment type="function">
    <text evidence="1">Produces ATP from ADP in the presence of a proton gradient across the membrane. The alpha chain is a regulatory subunit.</text>
</comment>
<comment type="catalytic activity">
    <reaction evidence="1">
        <text>ATP + H2O + 4 H(+)(in) = ADP + phosphate + 5 H(+)(out)</text>
        <dbReference type="Rhea" id="RHEA:57720"/>
        <dbReference type="ChEBI" id="CHEBI:15377"/>
        <dbReference type="ChEBI" id="CHEBI:15378"/>
        <dbReference type="ChEBI" id="CHEBI:30616"/>
        <dbReference type="ChEBI" id="CHEBI:43474"/>
        <dbReference type="ChEBI" id="CHEBI:456216"/>
        <dbReference type="EC" id="7.1.2.2"/>
    </reaction>
</comment>
<comment type="subunit">
    <text evidence="1">F-type ATPases have 2 components, CF(1) - the catalytic core - and CF(0) - the membrane proton channel. CF(1) has five subunits: alpha(3), beta(3), gamma(1), delta(1), epsilon(1). CF(0) has three main subunits: a(1), b(2) and c(9-12). The alpha and beta chains form an alternating ring which encloses part of the gamma chain. CF(1) is attached to CF(0) by a central stalk formed by the gamma and epsilon chains, while a peripheral stalk is formed by the delta and b chains.</text>
</comment>
<comment type="subcellular location">
    <subcellularLocation>
        <location evidence="1">Cell membrane</location>
        <topology evidence="1">Peripheral membrane protein</topology>
    </subcellularLocation>
</comment>
<comment type="similarity">
    <text evidence="1">Belongs to the ATPase alpha/beta chains family.</text>
</comment>
<organism>
    <name type="scientific">Lachnoclostridium phytofermentans (strain ATCC 700394 / DSM 18823 / ISDg)</name>
    <name type="common">Clostridium phytofermentans</name>
    <dbReference type="NCBI Taxonomy" id="357809"/>
    <lineage>
        <taxon>Bacteria</taxon>
        <taxon>Bacillati</taxon>
        <taxon>Bacillota</taxon>
        <taxon>Clostridia</taxon>
        <taxon>Lachnospirales</taxon>
        <taxon>Lachnospiraceae</taxon>
    </lineage>
</organism>
<evidence type="ECO:0000255" key="1">
    <source>
        <dbReference type="HAMAP-Rule" id="MF_01346"/>
    </source>
</evidence>
<dbReference type="EC" id="7.1.2.2" evidence="1"/>
<dbReference type="EMBL" id="CP000885">
    <property type="protein sequence ID" value="ABX44085.1"/>
    <property type="molecule type" value="Genomic_DNA"/>
</dbReference>
<dbReference type="RefSeq" id="WP_012201733.1">
    <property type="nucleotide sequence ID" value="NC_010001.1"/>
</dbReference>
<dbReference type="SMR" id="A9KK94"/>
<dbReference type="STRING" id="357809.Cphy_3738"/>
<dbReference type="KEGG" id="cpy:Cphy_3738"/>
<dbReference type="eggNOG" id="COG0056">
    <property type="taxonomic scope" value="Bacteria"/>
</dbReference>
<dbReference type="HOGENOM" id="CLU_010091_2_1_9"/>
<dbReference type="OrthoDB" id="9803053at2"/>
<dbReference type="Proteomes" id="UP000000370">
    <property type="component" value="Chromosome"/>
</dbReference>
<dbReference type="GO" id="GO:0005886">
    <property type="term" value="C:plasma membrane"/>
    <property type="evidence" value="ECO:0007669"/>
    <property type="project" value="UniProtKB-SubCell"/>
</dbReference>
<dbReference type="GO" id="GO:0045259">
    <property type="term" value="C:proton-transporting ATP synthase complex"/>
    <property type="evidence" value="ECO:0007669"/>
    <property type="project" value="UniProtKB-KW"/>
</dbReference>
<dbReference type="GO" id="GO:0043531">
    <property type="term" value="F:ADP binding"/>
    <property type="evidence" value="ECO:0007669"/>
    <property type="project" value="TreeGrafter"/>
</dbReference>
<dbReference type="GO" id="GO:0005524">
    <property type="term" value="F:ATP binding"/>
    <property type="evidence" value="ECO:0007669"/>
    <property type="project" value="UniProtKB-UniRule"/>
</dbReference>
<dbReference type="GO" id="GO:0046933">
    <property type="term" value="F:proton-transporting ATP synthase activity, rotational mechanism"/>
    <property type="evidence" value="ECO:0007669"/>
    <property type="project" value="UniProtKB-UniRule"/>
</dbReference>
<dbReference type="CDD" id="cd18113">
    <property type="entry name" value="ATP-synt_F1_alpha_C"/>
    <property type="match status" value="1"/>
</dbReference>
<dbReference type="CDD" id="cd18116">
    <property type="entry name" value="ATP-synt_F1_alpha_N"/>
    <property type="match status" value="1"/>
</dbReference>
<dbReference type="CDD" id="cd01132">
    <property type="entry name" value="F1-ATPase_alpha_CD"/>
    <property type="match status" value="1"/>
</dbReference>
<dbReference type="FunFam" id="1.20.150.20:FF:000001">
    <property type="entry name" value="ATP synthase subunit alpha"/>
    <property type="match status" value="1"/>
</dbReference>
<dbReference type="FunFam" id="2.40.30.20:FF:000001">
    <property type="entry name" value="ATP synthase subunit alpha"/>
    <property type="match status" value="1"/>
</dbReference>
<dbReference type="FunFam" id="3.40.50.300:FF:000002">
    <property type="entry name" value="ATP synthase subunit alpha"/>
    <property type="match status" value="1"/>
</dbReference>
<dbReference type="Gene3D" id="2.40.30.20">
    <property type="match status" value="1"/>
</dbReference>
<dbReference type="Gene3D" id="1.20.150.20">
    <property type="entry name" value="ATP synthase alpha/beta chain, C-terminal domain"/>
    <property type="match status" value="1"/>
</dbReference>
<dbReference type="Gene3D" id="3.40.50.300">
    <property type="entry name" value="P-loop containing nucleotide triphosphate hydrolases"/>
    <property type="match status" value="1"/>
</dbReference>
<dbReference type="HAMAP" id="MF_01346">
    <property type="entry name" value="ATP_synth_alpha_bact"/>
    <property type="match status" value="1"/>
</dbReference>
<dbReference type="InterPro" id="IPR023366">
    <property type="entry name" value="ATP_synth_asu-like_sf"/>
</dbReference>
<dbReference type="InterPro" id="IPR000793">
    <property type="entry name" value="ATP_synth_asu_C"/>
</dbReference>
<dbReference type="InterPro" id="IPR038376">
    <property type="entry name" value="ATP_synth_asu_C_sf"/>
</dbReference>
<dbReference type="InterPro" id="IPR033732">
    <property type="entry name" value="ATP_synth_F1_a_nt-bd_dom"/>
</dbReference>
<dbReference type="InterPro" id="IPR005294">
    <property type="entry name" value="ATP_synth_F1_asu"/>
</dbReference>
<dbReference type="InterPro" id="IPR020003">
    <property type="entry name" value="ATPase_a/bsu_AS"/>
</dbReference>
<dbReference type="InterPro" id="IPR004100">
    <property type="entry name" value="ATPase_F1/V1/A1_a/bsu_N"/>
</dbReference>
<dbReference type="InterPro" id="IPR036121">
    <property type="entry name" value="ATPase_F1/V1/A1_a/bsu_N_sf"/>
</dbReference>
<dbReference type="InterPro" id="IPR000194">
    <property type="entry name" value="ATPase_F1/V1/A1_a/bsu_nucl-bd"/>
</dbReference>
<dbReference type="InterPro" id="IPR027417">
    <property type="entry name" value="P-loop_NTPase"/>
</dbReference>
<dbReference type="NCBIfam" id="TIGR00962">
    <property type="entry name" value="atpA"/>
    <property type="match status" value="1"/>
</dbReference>
<dbReference type="NCBIfam" id="NF009884">
    <property type="entry name" value="PRK13343.1"/>
    <property type="match status" value="1"/>
</dbReference>
<dbReference type="PANTHER" id="PTHR48082">
    <property type="entry name" value="ATP SYNTHASE SUBUNIT ALPHA, MITOCHONDRIAL"/>
    <property type="match status" value="1"/>
</dbReference>
<dbReference type="PANTHER" id="PTHR48082:SF2">
    <property type="entry name" value="ATP SYNTHASE SUBUNIT ALPHA, MITOCHONDRIAL"/>
    <property type="match status" value="1"/>
</dbReference>
<dbReference type="Pfam" id="PF00006">
    <property type="entry name" value="ATP-synt_ab"/>
    <property type="match status" value="1"/>
</dbReference>
<dbReference type="Pfam" id="PF00306">
    <property type="entry name" value="ATP-synt_ab_C"/>
    <property type="match status" value="1"/>
</dbReference>
<dbReference type="Pfam" id="PF02874">
    <property type="entry name" value="ATP-synt_ab_N"/>
    <property type="match status" value="1"/>
</dbReference>
<dbReference type="PIRSF" id="PIRSF039088">
    <property type="entry name" value="F_ATPase_subunit_alpha"/>
    <property type="match status" value="1"/>
</dbReference>
<dbReference type="SUPFAM" id="SSF47917">
    <property type="entry name" value="C-terminal domain of alpha and beta subunits of F1 ATP synthase"/>
    <property type="match status" value="1"/>
</dbReference>
<dbReference type="SUPFAM" id="SSF50615">
    <property type="entry name" value="N-terminal domain of alpha and beta subunits of F1 ATP synthase"/>
    <property type="match status" value="1"/>
</dbReference>
<dbReference type="SUPFAM" id="SSF52540">
    <property type="entry name" value="P-loop containing nucleoside triphosphate hydrolases"/>
    <property type="match status" value="1"/>
</dbReference>
<dbReference type="PROSITE" id="PS00152">
    <property type="entry name" value="ATPASE_ALPHA_BETA"/>
    <property type="match status" value="1"/>
</dbReference>
<name>ATPA_LACP7</name>
<accession>A9KK94</accession>
<protein>
    <recommendedName>
        <fullName evidence="1">ATP synthase subunit alpha</fullName>
        <ecNumber evidence="1">7.1.2.2</ecNumber>
    </recommendedName>
    <alternativeName>
        <fullName evidence="1">ATP synthase F1 sector subunit alpha</fullName>
    </alternativeName>
    <alternativeName>
        <fullName evidence="1">F-ATPase subunit alpha</fullName>
    </alternativeName>
</protein>
<feature type="chain" id="PRO_1000086872" description="ATP synthase subunit alpha">
    <location>
        <begin position="1"/>
        <end position="502"/>
    </location>
</feature>
<feature type="binding site" evidence="1">
    <location>
        <begin position="169"/>
        <end position="176"/>
    </location>
    <ligand>
        <name>ATP</name>
        <dbReference type="ChEBI" id="CHEBI:30616"/>
    </ligand>
</feature>
<feature type="site" description="Required for activity" evidence="1">
    <location>
        <position position="362"/>
    </location>
</feature>
<keyword id="KW-0066">ATP synthesis</keyword>
<keyword id="KW-0067">ATP-binding</keyword>
<keyword id="KW-1003">Cell membrane</keyword>
<keyword id="KW-0139">CF(1)</keyword>
<keyword id="KW-0375">Hydrogen ion transport</keyword>
<keyword id="KW-0406">Ion transport</keyword>
<keyword id="KW-0472">Membrane</keyword>
<keyword id="KW-0547">Nucleotide-binding</keyword>
<keyword id="KW-1185">Reference proteome</keyword>
<keyword id="KW-1278">Translocase</keyword>
<keyword id="KW-0813">Transport</keyword>